<reference key="1">
    <citation type="submission" date="1999-03" db="EMBL/GenBank/DDBJ databases">
        <title>Molecular cloning and nucleotide sequence of a calreticulin from apricot (Prunus armeniaca cv. Bergeron).</title>
        <authorList>
            <person name="Mbeguie-A-Mbeguie D."/>
            <person name="Fils-Lycaon B.R."/>
        </authorList>
    </citation>
    <scope>NUCLEOTIDE SEQUENCE [MRNA]</scope>
    <source>
        <strain>cv. Bergeron</strain>
        <tissue>Endocarp</tissue>
        <tissue>Mesocarp</tissue>
    </source>
</reference>
<feature type="signal peptide" evidence="3">
    <location>
        <begin position="1"/>
        <end position="22"/>
    </location>
</feature>
<feature type="chain" id="PRO_0000004194" description="Calreticulin">
    <location>
        <begin position="23"/>
        <end position="421"/>
    </location>
</feature>
<feature type="repeat" description="1-1">
    <location>
        <begin position="196"/>
        <end position="207"/>
    </location>
</feature>
<feature type="repeat" description="1-2">
    <location>
        <begin position="215"/>
        <end position="226"/>
    </location>
</feature>
<feature type="repeat" description="1-3">
    <location>
        <begin position="232"/>
        <end position="243"/>
    </location>
</feature>
<feature type="repeat" description="1-4">
    <location>
        <begin position="250"/>
        <end position="261"/>
    </location>
</feature>
<feature type="repeat" description="2-1">
    <location>
        <begin position="265"/>
        <end position="275"/>
    </location>
</feature>
<feature type="repeat" description="2-2">
    <location>
        <begin position="279"/>
        <end position="289"/>
    </location>
</feature>
<feature type="repeat" description="2-3">
    <location>
        <begin position="293"/>
        <end position="303"/>
    </location>
</feature>
<feature type="region of interest" description="4 X approximate repeats">
    <location>
        <begin position="196"/>
        <end position="261"/>
    </location>
</feature>
<feature type="region of interest" description="Disordered" evidence="5">
    <location>
        <begin position="217"/>
        <end position="283"/>
    </location>
</feature>
<feature type="region of interest" description="3 X approximate repeats">
    <location>
        <begin position="265"/>
        <end position="303"/>
    </location>
</feature>
<feature type="region of interest" description="Disordered" evidence="5">
    <location>
        <begin position="350"/>
        <end position="421"/>
    </location>
</feature>
<feature type="short sequence motif" description="Prevents secretion from ER" evidence="4">
    <location>
        <begin position="418"/>
        <end position="421"/>
    </location>
</feature>
<feature type="compositionally biased region" description="Acidic residues" evidence="5">
    <location>
        <begin position="223"/>
        <end position="232"/>
    </location>
</feature>
<feature type="compositionally biased region" description="Basic and acidic residues" evidence="5">
    <location>
        <begin position="233"/>
        <end position="257"/>
    </location>
</feature>
<feature type="compositionally biased region" description="Basic and acidic residues" evidence="5">
    <location>
        <begin position="350"/>
        <end position="380"/>
    </location>
</feature>
<feature type="compositionally biased region" description="Acidic residues" evidence="5">
    <location>
        <begin position="381"/>
        <end position="399"/>
    </location>
</feature>
<feature type="binding site" evidence="2">
    <location>
        <position position="114"/>
    </location>
    <ligand>
        <name>an alpha-D-glucoside</name>
        <dbReference type="ChEBI" id="CHEBI:22390"/>
    </ligand>
</feature>
<feature type="binding site" evidence="2">
    <location>
        <position position="116"/>
    </location>
    <ligand>
        <name>an alpha-D-glucoside</name>
        <dbReference type="ChEBI" id="CHEBI:22390"/>
    </ligand>
</feature>
<feature type="binding site" evidence="2">
    <location>
        <position position="133"/>
    </location>
    <ligand>
        <name>an alpha-D-glucoside</name>
        <dbReference type="ChEBI" id="CHEBI:22390"/>
    </ligand>
</feature>
<feature type="binding site" evidence="2">
    <location>
        <position position="140"/>
    </location>
    <ligand>
        <name>an alpha-D-glucoside</name>
        <dbReference type="ChEBI" id="CHEBI:22390"/>
    </ligand>
</feature>
<feature type="binding site" evidence="2">
    <location>
        <position position="323"/>
    </location>
    <ligand>
        <name>an alpha-D-glucoside</name>
        <dbReference type="ChEBI" id="CHEBI:22390"/>
    </ligand>
</feature>
<feature type="glycosylation site" description="N-linked (GlcNAc...) asparagine" evidence="3">
    <location>
        <position position="56"/>
    </location>
</feature>
<feature type="glycosylation site" description="N-linked (GlcNAc...) asparagine" evidence="3">
    <location>
        <position position="156"/>
    </location>
</feature>
<feature type="disulfide bond" evidence="1">
    <location>
        <begin position="110"/>
        <end position="142"/>
    </location>
</feature>
<dbReference type="EMBL" id="AF134733">
    <property type="protein sequence ID" value="AAD32207.1"/>
    <property type="molecule type" value="mRNA"/>
</dbReference>
<dbReference type="SMR" id="Q9XF98"/>
<dbReference type="GO" id="GO:0005788">
    <property type="term" value="C:endoplasmic reticulum lumen"/>
    <property type="evidence" value="ECO:0007669"/>
    <property type="project" value="UniProtKB-SubCell"/>
</dbReference>
<dbReference type="GO" id="GO:0005789">
    <property type="term" value="C:endoplasmic reticulum membrane"/>
    <property type="evidence" value="ECO:0007669"/>
    <property type="project" value="TreeGrafter"/>
</dbReference>
<dbReference type="GO" id="GO:0005509">
    <property type="term" value="F:calcium ion binding"/>
    <property type="evidence" value="ECO:0007669"/>
    <property type="project" value="InterPro"/>
</dbReference>
<dbReference type="GO" id="GO:0030246">
    <property type="term" value="F:carbohydrate binding"/>
    <property type="evidence" value="ECO:0007669"/>
    <property type="project" value="UniProtKB-KW"/>
</dbReference>
<dbReference type="GO" id="GO:0051082">
    <property type="term" value="F:unfolded protein binding"/>
    <property type="evidence" value="ECO:0007669"/>
    <property type="project" value="InterPro"/>
</dbReference>
<dbReference type="GO" id="GO:0036503">
    <property type="term" value="P:ERAD pathway"/>
    <property type="evidence" value="ECO:0007669"/>
    <property type="project" value="TreeGrafter"/>
</dbReference>
<dbReference type="GO" id="GO:0006457">
    <property type="term" value="P:protein folding"/>
    <property type="evidence" value="ECO:0007669"/>
    <property type="project" value="InterPro"/>
</dbReference>
<dbReference type="FunFam" id="2.10.250.10:FF:000002">
    <property type="entry name" value="Calreticulin"/>
    <property type="match status" value="1"/>
</dbReference>
<dbReference type="FunFam" id="2.60.120.200:FF:000018">
    <property type="entry name" value="Calreticulin 1b"/>
    <property type="match status" value="1"/>
</dbReference>
<dbReference type="Gene3D" id="2.60.120.200">
    <property type="match status" value="1"/>
</dbReference>
<dbReference type="Gene3D" id="2.10.250.10">
    <property type="entry name" value="Calreticulin/calnexin, P domain"/>
    <property type="match status" value="1"/>
</dbReference>
<dbReference type="InterPro" id="IPR001580">
    <property type="entry name" value="Calret/calnex"/>
</dbReference>
<dbReference type="InterPro" id="IPR018124">
    <property type="entry name" value="Calret/calnex_CS"/>
</dbReference>
<dbReference type="InterPro" id="IPR009169">
    <property type="entry name" value="Calreticulin"/>
</dbReference>
<dbReference type="InterPro" id="IPR009033">
    <property type="entry name" value="Calreticulin/calnexin_P_dom_sf"/>
</dbReference>
<dbReference type="InterPro" id="IPR013320">
    <property type="entry name" value="ConA-like_dom_sf"/>
</dbReference>
<dbReference type="PANTHER" id="PTHR11073:SF2">
    <property type="entry name" value="CALRETICULIN"/>
    <property type="match status" value="1"/>
</dbReference>
<dbReference type="PANTHER" id="PTHR11073">
    <property type="entry name" value="CALRETICULIN AND CALNEXIN"/>
    <property type="match status" value="1"/>
</dbReference>
<dbReference type="Pfam" id="PF00262">
    <property type="entry name" value="Calreticulin"/>
    <property type="match status" value="2"/>
</dbReference>
<dbReference type="PIRSF" id="PIRSF002356">
    <property type="entry name" value="Calreticulin"/>
    <property type="match status" value="1"/>
</dbReference>
<dbReference type="PRINTS" id="PR00626">
    <property type="entry name" value="CALRETICULIN"/>
</dbReference>
<dbReference type="SUPFAM" id="SSF49899">
    <property type="entry name" value="Concanavalin A-like lectins/glucanases"/>
    <property type="match status" value="1"/>
</dbReference>
<dbReference type="SUPFAM" id="SSF63887">
    <property type="entry name" value="P-domain of calnexin/calreticulin"/>
    <property type="match status" value="1"/>
</dbReference>
<dbReference type="PROSITE" id="PS00803">
    <property type="entry name" value="CALRETICULIN_1"/>
    <property type="match status" value="1"/>
</dbReference>
<dbReference type="PROSITE" id="PS00804">
    <property type="entry name" value="CALRETICULIN_2"/>
    <property type="match status" value="1"/>
</dbReference>
<dbReference type="PROSITE" id="PS00805">
    <property type="entry name" value="CALRETICULIN_REPEAT"/>
    <property type="match status" value="2"/>
</dbReference>
<dbReference type="PROSITE" id="PS00014">
    <property type="entry name" value="ER_TARGET"/>
    <property type="match status" value="1"/>
</dbReference>
<comment type="function">
    <text evidence="1">Molecular calcium-binding chaperone promoting folding, oligomeric assembly and quality control in the ER via the calreticulin/calnexin cycle. This lectin may interact transiently with almost all of the monoglucosylated glycoproteins that are synthesized in the ER (By similarity).</text>
</comment>
<comment type="subcellular location">
    <subcellularLocation>
        <location evidence="4">Endoplasmic reticulum lumen</location>
    </subcellularLocation>
</comment>
<comment type="domain">
    <text evidence="1">Can be divided into a N-terminal globular domain, a proline-rich P-domain forming an elongated arm-like structure and a C-terminal acidic domain. The P-domain binds one molecule of calcium with high affinity, whereas the acidic C-domain binds multiple calcium ions with low affinity (By similarity).</text>
</comment>
<comment type="domain">
    <text evidence="1">The interaction with glycans occurs through a binding site in the globular lectin domain.</text>
</comment>
<comment type="domain">
    <text evidence="1">The zinc binding sites are localized to the N-domain.</text>
</comment>
<comment type="similarity">
    <text evidence="6">Belongs to the calreticulin family.</text>
</comment>
<sequence>MAFRVPNSSLLSLILLSLLAIASAKVFFEERFEDGWDKRWVTSEWKKDENLAGEWNYTSGKWNGDPNDKGIQTSEDYRFYAISAEFPEFSNKDKTLVFQFSVKHEQKLDCGGGYIKLLSGDVDQKKFGGDTPYSIMFGPDICGYSTKKVHAILNYNNTNNLIKKDVPCETDQLTHVYTFIIRPDATYSILIDNLEKQTGSLYSDWDLLPAKKIKDPEAKKPEDWEDQEYIPDPEDKKPEGYDDIPKEITDPDAKKPEDWDDEEDGEWTAPTIPNPEYKGEWKPKKIKNPNFKGKWKAPLIDNPEFKDDPELYVYPNLKYVGIELWQVKSGTLFDNILITDEPEYAKQLAEETWGKQKDAEKAAFEELEKKLQEEESKEDPVDSDAEDDDNEAEDGEESDSESKPDSTEESAETEAEKHDEL</sequence>
<name>CALR_PRUAR</name>
<evidence type="ECO:0000250" key="1"/>
<evidence type="ECO:0000250" key="2">
    <source>
        <dbReference type="UniProtKB" id="P14211"/>
    </source>
</evidence>
<evidence type="ECO:0000255" key="3"/>
<evidence type="ECO:0000255" key="4">
    <source>
        <dbReference type="PROSITE-ProRule" id="PRU10138"/>
    </source>
</evidence>
<evidence type="ECO:0000256" key="5">
    <source>
        <dbReference type="SAM" id="MobiDB-lite"/>
    </source>
</evidence>
<evidence type="ECO:0000305" key="6"/>
<proteinExistence type="evidence at transcript level"/>
<accession>Q9XF98</accession>
<keyword id="KW-0106">Calcium</keyword>
<keyword id="KW-0143">Chaperone</keyword>
<keyword id="KW-1015">Disulfide bond</keyword>
<keyword id="KW-0256">Endoplasmic reticulum</keyword>
<keyword id="KW-0325">Glycoprotein</keyword>
<keyword id="KW-0430">Lectin</keyword>
<keyword id="KW-0479">Metal-binding</keyword>
<keyword id="KW-0677">Repeat</keyword>
<keyword id="KW-0732">Signal</keyword>
<keyword id="KW-0862">Zinc</keyword>
<organism>
    <name type="scientific">Prunus armeniaca</name>
    <name type="common">Apricot</name>
    <name type="synonym">Armeniaca vulgaris</name>
    <dbReference type="NCBI Taxonomy" id="36596"/>
    <lineage>
        <taxon>Eukaryota</taxon>
        <taxon>Viridiplantae</taxon>
        <taxon>Streptophyta</taxon>
        <taxon>Embryophyta</taxon>
        <taxon>Tracheophyta</taxon>
        <taxon>Spermatophyta</taxon>
        <taxon>Magnoliopsida</taxon>
        <taxon>eudicotyledons</taxon>
        <taxon>Gunneridae</taxon>
        <taxon>Pentapetalae</taxon>
        <taxon>rosids</taxon>
        <taxon>fabids</taxon>
        <taxon>Rosales</taxon>
        <taxon>Rosaceae</taxon>
        <taxon>Amygdaloideae</taxon>
        <taxon>Amygdaleae</taxon>
        <taxon>Prunus</taxon>
    </lineage>
</organism>
<protein>
    <recommendedName>
        <fullName>Calreticulin</fullName>
    </recommendedName>
</protein>